<gene>
    <name evidence="1" type="primary">bdbC</name>
    <name type="ordered locus">BC_0779</name>
</gene>
<feature type="chain" id="PRO_0000059374" description="Probable disulfide formation protein C">
    <location>
        <begin position="1"/>
        <end position="139"/>
    </location>
</feature>
<feature type="transmembrane region" description="Helical" evidence="1">
    <location>
        <begin position="8"/>
        <end position="27"/>
    </location>
</feature>
<feature type="transmembrane region" description="Helical" evidence="1">
    <location>
        <begin position="42"/>
        <end position="61"/>
    </location>
</feature>
<feature type="transmembrane region" description="Helical" evidence="1">
    <location>
        <begin position="68"/>
        <end position="85"/>
    </location>
</feature>
<feature type="transmembrane region" description="Helical" evidence="1">
    <location>
        <begin position="113"/>
        <end position="135"/>
    </location>
</feature>
<feature type="disulfide bond" description="Redox-active" evidence="1">
    <location>
        <begin position="37"/>
        <end position="40"/>
    </location>
</feature>
<feature type="disulfide bond" description="Redox-active" evidence="1">
    <location>
        <begin position="99"/>
        <end position="104"/>
    </location>
</feature>
<comment type="function">
    <text evidence="1">Required for disulfide bond formation in some proteins.</text>
</comment>
<comment type="subcellular location">
    <subcellularLocation>
        <location evidence="1">Cell membrane</location>
        <topology evidence="1">Multi-pass membrane protein</topology>
    </subcellularLocation>
</comment>
<comment type="similarity">
    <text evidence="1">Belongs to the DsbB family. BdbC subfamily.</text>
</comment>
<protein>
    <recommendedName>
        <fullName evidence="1">Probable disulfide formation protein C</fullName>
    </recommendedName>
    <alternativeName>
        <fullName evidence="1">Disulfide oxidoreductase C</fullName>
    </alternativeName>
    <alternativeName>
        <fullName evidence="1">Thiol-disulfide oxidoreductase C</fullName>
    </alternativeName>
</protein>
<evidence type="ECO:0000255" key="1">
    <source>
        <dbReference type="HAMAP-Rule" id="MF_00287"/>
    </source>
</evidence>
<name>BDBC_BACCR</name>
<proteinExistence type="inferred from homology"/>
<dbReference type="EMBL" id="AE016877">
    <property type="protein sequence ID" value="AAP07770.1"/>
    <property type="molecule type" value="Genomic_DNA"/>
</dbReference>
<dbReference type="RefSeq" id="NP_830569.1">
    <property type="nucleotide sequence ID" value="NC_004722.1"/>
</dbReference>
<dbReference type="RefSeq" id="WP_000532263.1">
    <property type="nucleotide sequence ID" value="NZ_CP138336.1"/>
</dbReference>
<dbReference type="STRING" id="226900.BC_0779"/>
<dbReference type="KEGG" id="bce:BC0779"/>
<dbReference type="PATRIC" id="fig|226900.8.peg.722"/>
<dbReference type="HOGENOM" id="CLU_128688_0_0_9"/>
<dbReference type="OrthoDB" id="158402at2"/>
<dbReference type="Proteomes" id="UP000001417">
    <property type="component" value="Chromosome"/>
</dbReference>
<dbReference type="GO" id="GO:0005886">
    <property type="term" value="C:plasma membrane"/>
    <property type="evidence" value="ECO:0007669"/>
    <property type="project" value="UniProtKB-SubCell"/>
</dbReference>
<dbReference type="GO" id="GO:0015035">
    <property type="term" value="F:protein-disulfide reductase activity"/>
    <property type="evidence" value="ECO:0007669"/>
    <property type="project" value="UniProtKB-UniRule"/>
</dbReference>
<dbReference type="GO" id="GO:0006457">
    <property type="term" value="P:protein folding"/>
    <property type="evidence" value="ECO:0007669"/>
    <property type="project" value="InterPro"/>
</dbReference>
<dbReference type="FunFam" id="1.20.1550.10:FF:000003">
    <property type="entry name" value="Probable disulfide formation protein"/>
    <property type="match status" value="1"/>
</dbReference>
<dbReference type="Gene3D" id="1.20.1550.10">
    <property type="entry name" value="DsbB-like"/>
    <property type="match status" value="1"/>
</dbReference>
<dbReference type="HAMAP" id="MF_00287">
    <property type="entry name" value="BdbC"/>
    <property type="match status" value="1"/>
</dbReference>
<dbReference type="InterPro" id="IPR003752">
    <property type="entry name" value="DiS_bond_form_DsbB/BdbC"/>
</dbReference>
<dbReference type="InterPro" id="IPR012187">
    <property type="entry name" value="Disulphide_bond_form_BdbC"/>
</dbReference>
<dbReference type="InterPro" id="IPR023380">
    <property type="entry name" value="DsbB-like_sf"/>
</dbReference>
<dbReference type="NCBIfam" id="NF002849">
    <property type="entry name" value="PRK03113.1"/>
    <property type="match status" value="1"/>
</dbReference>
<dbReference type="PANTHER" id="PTHR43469">
    <property type="entry name" value="DISULFIDE FORMATION PROTEIN-RELATED"/>
    <property type="match status" value="1"/>
</dbReference>
<dbReference type="PANTHER" id="PTHR43469:SF1">
    <property type="entry name" value="SPBETA PROPHAGE-DERIVED DISULFIDE BOND FORMATION PROTEIN B"/>
    <property type="match status" value="1"/>
</dbReference>
<dbReference type="Pfam" id="PF02600">
    <property type="entry name" value="DsbB"/>
    <property type="match status" value="1"/>
</dbReference>
<dbReference type="PIRSF" id="PIRSF036659">
    <property type="entry name" value="BdbC"/>
    <property type="match status" value="1"/>
</dbReference>
<dbReference type="SUPFAM" id="SSF158442">
    <property type="entry name" value="DsbB-like"/>
    <property type="match status" value="1"/>
</dbReference>
<accession>Q81HM5</accession>
<sequence>MGREKKQEYALLTAWGASFIATLGSLYFSEIMKFEPCVLCWYQRIFMYPFVLWLGIAVAKKDYRIASYSLPIASIGACISLYHYAIQKVAAFSAAGAACGRVPCTGEYINWFGFVTIPFLALIGFITIAVCSFIVIKNK</sequence>
<organism>
    <name type="scientific">Bacillus cereus (strain ATCC 14579 / DSM 31 / CCUG 7414 / JCM 2152 / NBRC 15305 / NCIMB 9373 / NCTC 2599 / NRRL B-3711)</name>
    <dbReference type="NCBI Taxonomy" id="226900"/>
    <lineage>
        <taxon>Bacteria</taxon>
        <taxon>Bacillati</taxon>
        <taxon>Bacillota</taxon>
        <taxon>Bacilli</taxon>
        <taxon>Bacillales</taxon>
        <taxon>Bacillaceae</taxon>
        <taxon>Bacillus</taxon>
        <taxon>Bacillus cereus group</taxon>
    </lineage>
</organism>
<keyword id="KW-1003">Cell membrane</keyword>
<keyword id="KW-0143">Chaperone</keyword>
<keyword id="KW-1015">Disulfide bond</keyword>
<keyword id="KW-0249">Electron transport</keyword>
<keyword id="KW-0472">Membrane</keyword>
<keyword id="KW-0560">Oxidoreductase</keyword>
<keyword id="KW-0676">Redox-active center</keyword>
<keyword id="KW-1185">Reference proteome</keyword>
<keyword id="KW-0812">Transmembrane</keyword>
<keyword id="KW-1133">Transmembrane helix</keyword>
<keyword id="KW-0813">Transport</keyword>
<reference key="1">
    <citation type="journal article" date="2003" name="Nature">
        <title>Genome sequence of Bacillus cereus and comparative analysis with Bacillus anthracis.</title>
        <authorList>
            <person name="Ivanova N."/>
            <person name="Sorokin A."/>
            <person name="Anderson I."/>
            <person name="Galleron N."/>
            <person name="Candelon B."/>
            <person name="Kapatral V."/>
            <person name="Bhattacharyya A."/>
            <person name="Reznik G."/>
            <person name="Mikhailova N."/>
            <person name="Lapidus A."/>
            <person name="Chu L."/>
            <person name="Mazur M."/>
            <person name="Goltsman E."/>
            <person name="Larsen N."/>
            <person name="D'Souza M."/>
            <person name="Walunas T."/>
            <person name="Grechkin Y."/>
            <person name="Pusch G."/>
            <person name="Haselkorn R."/>
            <person name="Fonstein M."/>
            <person name="Ehrlich S.D."/>
            <person name="Overbeek R."/>
            <person name="Kyrpides N.C."/>
        </authorList>
    </citation>
    <scope>NUCLEOTIDE SEQUENCE [LARGE SCALE GENOMIC DNA]</scope>
    <source>
        <strain>ATCC 14579 / DSM 31 / CCUG 7414 / JCM 2152 / NBRC 15305 / NCIMB 9373 / NCTC 2599 / NRRL B-3711</strain>
    </source>
</reference>